<dbReference type="EMBL" id="L42023">
    <property type="protein sequence ID" value="AAC22730.1"/>
    <property type="molecule type" value="Genomic_DNA"/>
</dbReference>
<dbReference type="PIR" id="B64020">
    <property type="entry name" value="B64020"/>
</dbReference>
<dbReference type="RefSeq" id="NP_439230.1">
    <property type="nucleotide sequence ID" value="NC_000907.1"/>
</dbReference>
<dbReference type="STRING" id="71421.HI_1074"/>
<dbReference type="EnsemblBacteria" id="AAC22730">
    <property type="protein sequence ID" value="AAC22730"/>
    <property type="gene ID" value="HI_1074"/>
</dbReference>
<dbReference type="KEGG" id="hin:HI_1074"/>
<dbReference type="PATRIC" id="fig|71421.8.peg.1116"/>
<dbReference type="eggNOG" id="COG2707">
    <property type="taxonomic scope" value="Bacteria"/>
</dbReference>
<dbReference type="HOGENOM" id="CLU_125889_0_0_6"/>
<dbReference type="OrthoDB" id="80306at2"/>
<dbReference type="PhylomeDB" id="P44110"/>
<dbReference type="BioCyc" id="HINF71421:G1GJ1-1108-MONOMER"/>
<dbReference type="Proteomes" id="UP000000579">
    <property type="component" value="Chromosome"/>
</dbReference>
<dbReference type="GO" id="GO:0005886">
    <property type="term" value="C:plasma membrane"/>
    <property type="evidence" value="ECO:0000318"/>
    <property type="project" value="GO_Central"/>
</dbReference>
<dbReference type="HAMAP" id="MF_01874">
    <property type="entry name" value="UPF0756"/>
    <property type="match status" value="1"/>
</dbReference>
<dbReference type="InterPro" id="IPR007382">
    <property type="entry name" value="UPF0756_TM"/>
</dbReference>
<dbReference type="PANTHER" id="PTHR38452">
    <property type="entry name" value="UPF0756 MEMBRANE PROTEIN YEAL"/>
    <property type="match status" value="1"/>
</dbReference>
<dbReference type="PANTHER" id="PTHR38452:SF1">
    <property type="entry name" value="UPF0756 MEMBRANE PROTEIN YEAL"/>
    <property type="match status" value="1"/>
</dbReference>
<dbReference type="Pfam" id="PF04284">
    <property type="entry name" value="DUF441"/>
    <property type="match status" value="1"/>
</dbReference>
<reference key="1">
    <citation type="journal article" date="1995" name="Science">
        <title>Whole-genome random sequencing and assembly of Haemophilus influenzae Rd.</title>
        <authorList>
            <person name="Fleischmann R.D."/>
            <person name="Adams M.D."/>
            <person name="White O."/>
            <person name="Clayton R.A."/>
            <person name="Kirkness E.F."/>
            <person name="Kerlavage A.R."/>
            <person name="Bult C.J."/>
            <person name="Tomb J.-F."/>
            <person name="Dougherty B.A."/>
            <person name="Merrick J.M."/>
            <person name="McKenney K."/>
            <person name="Sutton G.G."/>
            <person name="FitzHugh W."/>
            <person name="Fields C.A."/>
            <person name="Gocayne J.D."/>
            <person name="Scott J.D."/>
            <person name="Shirley R."/>
            <person name="Liu L.-I."/>
            <person name="Glodek A."/>
            <person name="Kelley J.M."/>
            <person name="Weidman J.F."/>
            <person name="Phillips C.A."/>
            <person name="Spriggs T."/>
            <person name="Hedblom E."/>
            <person name="Cotton M.D."/>
            <person name="Utterback T.R."/>
            <person name="Hanna M.C."/>
            <person name="Nguyen D.T."/>
            <person name="Saudek D.M."/>
            <person name="Brandon R.C."/>
            <person name="Fine L.D."/>
            <person name="Fritchman J.L."/>
            <person name="Fuhrmann J.L."/>
            <person name="Geoghagen N.S.M."/>
            <person name="Gnehm C.L."/>
            <person name="McDonald L.A."/>
            <person name="Small K.V."/>
            <person name="Fraser C.M."/>
            <person name="Smith H.O."/>
            <person name="Venter J.C."/>
        </authorList>
    </citation>
    <scope>NUCLEOTIDE SEQUENCE [LARGE SCALE GENOMIC DNA]</scope>
    <source>
        <strain>ATCC 51907 / DSM 11121 / KW20 / Rd</strain>
    </source>
</reference>
<evidence type="ECO:0000255" key="1">
    <source>
        <dbReference type="HAMAP-Rule" id="MF_01874"/>
    </source>
</evidence>
<sequence length="150" mass="15479">MTLQLNTIALLLVILLILGVLSNNSTITISAAVLLIMQQTFLSSHIPLLEKYGVKIGIIILTIGVLSPLVSGKIQLPDLSGFLSWKMALSISVGVLVAWLAGKGVPLMGEQPILVTGLLIGTIIGVAFLGGIPVGPLIAAGILALLLGKI</sequence>
<accession>P44110</accession>
<gene>
    <name type="ordered locus">HI_1074</name>
</gene>
<name>Y1074_HAEIN</name>
<proteinExistence type="inferred from homology"/>
<keyword id="KW-1003">Cell membrane</keyword>
<keyword id="KW-0472">Membrane</keyword>
<keyword id="KW-1185">Reference proteome</keyword>
<keyword id="KW-0812">Transmembrane</keyword>
<keyword id="KW-1133">Transmembrane helix</keyword>
<feature type="chain" id="PRO_0000169022" description="UPF0756 membrane protein HI_1074">
    <location>
        <begin position="1"/>
        <end position="150"/>
    </location>
</feature>
<feature type="transmembrane region" description="Helical" evidence="1">
    <location>
        <begin position="1"/>
        <end position="21"/>
    </location>
</feature>
<feature type="transmembrane region" description="Helical" evidence="1">
    <location>
        <begin position="52"/>
        <end position="72"/>
    </location>
</feature>
<feature type="transmembrane region" description="Helical" evidence="1">
    <location>
        <begin position="81"/>
        <end position="101"/>
    </location>
</feature>
<feature type="transmembrane region" description="Helical" evidence="1">
    <location>
        <begin position="123"/>
        <end position="143"/>
    </location>
</feature>
<organism>
    <name type="scientific">Haemophilus influenzae (strain ATCC 51907 / DSM 11121 / KW20 / Rd)</name>
    <dbReference type="NCBI Taxonomy" id="71421"/>
    <lineage>
        <taxon>Bacteria</taxon>
        <taxon>Pseudomonadati</taxon>
        <taxon>Pseudomonadota</taxon>
        <taxon>Gammaproteobacteria</taxon>
        <taxon>Pasteurellales</taxon>
        <taxon>Pasteurellaceae</taxon>
        <taxon>Haemophilus</taxon>
    </lineage>
</organism>
<protein>
    <recommendedName>
        <fullName evidence="1">UPF0756 membrane protein HI_1074</fullName>
    </recommendedName>
</protein>
<comment type="subcellular location">
    <subcellularLocation>
        <location evidence="1">Cell membrane</location>
        <topology evidence="1">Multi-pass membrane protein</topology>
    </subcellularLocation>
</comment>
<comment type="similarity">
    <text evidence="1">Belongs to the UPF0756 family.</text>
</comment>